<sequence length="959" mass="104618">MTVTTPFVNGTSYCTVTAYSVQSYKAAIDFYTKFLSLENRSSPDENSTLLSNDSISLKILLRPDEKINKNVEAHLKELNSITKTQDWRSHATQSLVFNTSDILAVKDTLNAMNAPLQGYPTELFPMQLYTLDPLGNVVGVTSTKNAVSTKPTPPPAPEASAESGLSSKVHSYTDLAYRMKTTDTYPSLPKPLNRPQKAIAVMTSGGDAPGMNSNVRAIVRSAIFKGCRAFVVMEGYEGLVRGGPEYIKEFHWEDVRGWSAEGGTNIGTARCMEFKKREGRLLGAQHLIEAGVDALIVCGGDGSLTGADLFRSEWPSLIEELLKTNRISNEQYERMKHLNICGTVGSIDNDMSTTDATIGAYSALDRICKAIDYVEATANSHSRAFVVEVMGRNCGWLALLAGIATSADYIFIPEKPATSSEWQDQMCDIVSKHRSRGKRTTIVVVAEGAIAADLTPISPSDVHKVLVDRLGLDTRITTLGHVQRGGTAVAYDRILATLQGLEAVNAVLESTPDTPSPLIAVNENKIVRKPLMESVKLTKAVAEAIQAKDFKRAMSLRDTEFIEHLNNFMAINSADHNEPKLPKDKRLKIAIVNVGAPAGGINSAVYSMATYCMSQGHRPYAIYNGWSGLARHESVRSLNWKDMLGWQSRGGSEIGTNRVTPEEADLGMIAYYFQKYEFDGLIIVGGFEAFESLHQLERARESYPAFRIPMVLIPATLSNNVPGTEYSLGSDTALNALMEYCDVVKQSASSTRGRAFVVDCQGGNSGYLATYASLAVGAQVSYVPEEGISLEQLSEDIEYLAQSFEKAEGRGRFGKLILKSTNASKALSATKLAEVITAEADGRFDAKPAYPGHVQQGGLPSPIDRTRATRMAIKAVGFIKDNQAAIAEARAAEENFNADDKTISDTAAVVGVKGSHVVYNSIRQLYDYETEVSMRMPKVIHWQATRLIADHLVGRKRVD</sequence>
<gene>
    <name type="primary">PFK2</name>
    <name type="ordered locus">YMR205C</name>
    <name type="ORF">YM8325.06C</name>
</gene>
<proteinExistence type="evidence at protein level"/>
<keyword id="KW-0002">3D-structure</keyword>
<keyword id="KW-0021">Allosteric enzyme</keyword>
<keyword id="KW-0067">ATP-binding</keyword>
<keyword id="KW-0963">Cytoplasm</keyword>
<keyword id="KW-0903">Direct protein sequencing</keyword>
<keyword id="KW-0324">Glycolysis</keyword>
<keyword id="KW-0418">Kinase</keyword>
<keyword id="KW-0460">Magnesium</keyword>
<keyword id="KW-0472">Membrane</keyword>
<keyword id="KW-0479">Metal-binding</keyword>
<keyword id="KW-0496">Mitochondrion</keyword>
<keyword id="KW-1000">Mitochondrion outer membrane</keyword>
<keyword id="KW-0547">Nucleotide-binding</keyword>
<keyword id="KW-0597">Phosphoprotein</keyword>
<keyword id="KW-1185">Reference proteome</keyword>
<keyword id="KW-0808">Transferase</keyword>
<name>PFKA2_YEAST</name>
<accession>P16862</accession>
<accession>D6W030</accession>
<reference key="1">
    <citation type="journal article" date="1989" name="Gene">
        <title>The phosphofructokinase genes of yeast evolved from two duplication events.</title>
        <authorList>
            <person name="Heinisch J.J."/>
            <person name="Ritzel R.G."/>
            <person name="von Borstel R.C."/>
            <person name="Aguilera A."/>
            <person name="Rodicio R."/>
            <person name="Zimmermann F.K."/>
        </authorList>
    </citation>
    <scope>NUCLEOTIDE SEQUENCE [GENOMIC DNA]</scope>
</reference>
<reference key="2">
    <citation type="journal article" date="1997" name="Nature">
        <title>The nucleotide sequence of Saccharomyces cerevisiae chromosome XIII.</title>
        <authorList>
            <person name="Bowman S."/>
            <person name="Churcher C.M."/>
            <person name="Badcock K."/>
            <person name="Brown D."/>
            <person name="Chillingworth T."/>
            <person name="Connor R."/>
            <person name="Dedman K."/>
            <person name="Devlin K."/>
            <person name="Gentles S."/>
            <person name="Hamlin N."/>
            <person name="Hunt S."/>
            <person name="Jagels K."/>
            <person name="Lye G."/>
            <person name="Moule S."/>
            <person name="Odell C."/>
            <person name="Pearson D."/>
            <person name="Rajandream M.A."/>
            <person name="Rice P."/>
            <person name="Skelton J."/>
            <person name="Walsh S.V."/>
            <person name="Whitehead S."/>
            <person name="Barrell B.G."/>
        </authorList>
    </citation>
    <scope>NUCLEOTIDE SEQUENCE [LARGE SCALE GENOMIC DNA]</scope>
    <source>
        <strain>ATCC 204508 / S288c</strain>
    </source>
</reference>
<reference key="3">
    <citation type="journal article" date="2014" name="G3 (Bethesda)">
        <title>The reference genome sequence of Saccharomyces cerevisiae: Then and now.</title>
        <authorList>
            <person name="Engel S.R."/>
            <person name="Dietrich F.S."/>
            <person name="Fisk D.G."/>
            <person name="Binkley G."/>
            <person name="Balakrishnan R."/>
            <person name="Costanzo M.C."/>
            <person name="Dwight S.S."/>
            <person name="Hitz B.C."/>
            <person name="Karra K."/>
            <person name="Nash R.S."/>
            <person name="Weng S."/>
            <person name="Wong E.D."/>
            <person name="Lloyd P."/>
            <person name="Skrzypek M.S."/>
            <person name="Miyasato S.R."/>
            <person name="Simison M."/>
            <person name="Cherry J.M."/>
        </authorList>
    </citation>
    <scope>GENOME REANNOTATION</scope>
    <source>
        <strain>ATCC 204508 / S288c</strain>
    </source>
</reference>
<reference key="4">
    <citation type="journal article" date="1993" name="Eur. J. Biochem.">
        <title>Limited proteolysis of yeast phosphofructokinase. Sequence locations of cleavage sites created by the actions of different proteinases.</title>
        <authorList>
            <person name="Kopperschlaeger G."/>
            <person name="Baer J."/>
            <person name="Stellwagen E."/>
        </authorList>
    </citation>
    <scope>PROTEIN SEQUENCE OF 2-12; 181-185 AND 193-197</scope>
</reference>
<reference key="5">
    <citation type="journal article" date="1977" name="Eur. J. Biochem.">
        <title>Physicochemical parameters and subunit composition of yeast phosphofructokinase.</title>
        <authorList>
            <person name="Kopperschlaeger G."/>
            <person name="Baer J."/>
            <person name="Nissler K."/>
            <person name="Hofmann E."/>
        </authorList>
    </citation>
    <scope>SUBUNIT</scope>
</reference>
<reference key="6">
    <citation type="journal article" date="1977" name="J. Biol. Chem.">
        <title>Activation by phosphate of yeast phosphofructokinase.</title>
        <authorList>
            <person name="Banuelos M."/>
            <person name="Gancedo C."/>
            <person name="Gancedo J.M."/>
        </authorList>
    </citation>
    <scope>ACTIVITY REGULATION</scope>
</reference>
<reference key="7">
    <citation type="journal article" date="1979" name="Biochemistry">
        <title>Phosphorus-31 nuclear magnetic resonance studies of wild-type and glycolytic pathway mutants of Saccharomyces cerevisiae.</title>
        <authorList>
            <person name="Navon G."/>
            <person name="Shulman R.G."/>
            <person name="Yamane T."/>
            <person name="Eccleshall T.R."/>
            <person name="Lam K.B."/>
            <person name="Baronofsky J.J."/>
            <person name="Marmur J."/>
        </authorList>
    </citation>
    <scope>FUNCTION</scope>
</reference>
<reference key="8">
    <citation type="journal article" date="1981" name="Biochem. Biophys. Res. Commun.">
        <title>Stimulation of yeast phosphofructokinase activity by fructose 2,6-bisphosphate.</title>
        <authorList>
            <person name="Avigad G."/>
        </authorList>
    </citation>
    <scope>ACTIVITY REGULATION</scope>
</reference>
<reference key="9">
    <citation type="journal article" date="1982" name="Biochemistry">
        <title>Mutant studies of yeast phosphofructokinase.</title>
        <authorList>
            <person name="Clifton D."/>
            <person name="Fraenkel D.G."/>
        </authorList>
    </citation>
    <scope>FUNCTION</scope>
</reference>
<reference key="10">
    <citation type="journal article" date="1983" name="Biochem. Biophys. Res. Commun.">
        <title>Similarity of activation of yeast phosphofructokinase by AMP and fructose-2,6-bisphosphate.</title>
        <authorList>
            <person name="Nissler K."/>
            <person name="Otto A."/>
            <person name="Schellenberger W."/>
            <person name="Hofmann E."/>
        </authorList>
    </citation>
    <scope>FUNCTION</scope>
    <scope>CATALYTIC ACTIVITY</scope>
    <scope>BIOPHYSICOCHEMICAL PROPERTIES</scope>
    <scope>ACTIVITY REGULATION</scope>
</reference>
<reference key="11">
    <citation type="journal article" date="1985" name="Adv. Enzyme Regul.">
        <title>Temporal organization of the phosphofructokinase/fructose-1,6-biphosphatase cycle.</title>
        <authorList>
            <person name="Hofmann E."/>
            <person name="Eschrich K."/>
            <person name="Schellenberger W."/>
        </authorList>
    </citation>
    <scope>FUNCTION</scope>
</reference>
<reference key="12">
    <citation type="journal article" date="1985" name="Biomed. Biochim. Acta">
        <title>An electron microscopy study of the quarternary structure of yeast phosphofructokinase.</title>
        <authorList>
            <person name="Nissler K."/>
            <person name="Hofmann E."/>
            <person name="Stel'maschchuk V."/>
            <person name="Orlova E."/>
            <person name="Kiselev N."/>
        </authorList>
    </citation>
    <scope>SUBUNIT</scope>
</reference>
<reference key="13">
    <citation type="journal article" date="1986" name="Mol. Gen. Genet.">
        <title>Isolation and characterization of the two structural genes coding for phosphofructokinase in yeast.</title>
        <authorList>
            <person name="Heinisch J."/>
        </authorList>
    </citation>
    <scope>FUNCTION</scope>
</reference>
<reference key="14">
    <citation type="journal article" date="1994" name="J. Biol. Chem.">
        <title>Studies on the function of yeast phosphofructokinase subunits by in vitro mutagenesis.</title>
        <authorList>
            <person name="Arvanitidis A."/>
            <person name="Heinisch J.J."/>
        </authorList>
    </citation>
    <scope>FUNCTION</scope>
    <scope>MUTAGENESIS OF ASP-301; ASP-348; ARG-439 AND HIS-481</scope>
</reference>
<reference key="15">
    <citation type="journal article" date="1996" name="J. Biol. Chem.">
        <title>A yeast phosphofructokinase insensitive to the Fructose 2,6-bisphosphate; allosteric activator. Glycolysis/metabolic regulation/allosteric control.</title>
        <authorList>
            <person name="Heinisch J.J."/>
            <person name="Boles E."/>
            <person name="Timpel C."/>
        </authorList>
    </citation>
    <scope>FUNCTION</scope>
    <scope>MUTAGENESIS OF SER-718 AND HIS-853</scope>
</reference>
<reference key="16">
    <citation type="journal article" date="2000" name="J. Biol. Chem.">
        <title>Single point mutations in either gene encoding the subunits of the heterooctameric yeast phosphofructokinase abolish allosteric inhibition by ATP.</title>
        <authorList>
            <person name="Rodicio R."/>
            <person name="Strauss A."/>
            <person name="Heinisch J.J."/>
        </authorList>
    </citation>
    <scope>FUNCTION</scope>
    <scope>MUTAGENESIS OF PRO-722</scope>
</reference>
<reference key="17">
    <citation type="journal article" date="2003" name="Nature">
        <title>Global analysis of protein expression in yeast.</title>
        <authorList>
            <person name="Ghaemmaghami S."/>
            <person name="Huh W.-K."/>
            <person name="Bower K."/>
            <person name="Howson R.W."/>
            <person name="Belle A."/>
            <person name="Dephoure N."/>
            <person name="O'Shea E.K."/>
            <person name="Weissman J.S."/>
        </authorList>
    </citation>
    <scope>LEVEL OF PROTEIN EXPRESSION [LARGE SCALE ANALYSIS]</scope>
</reference>
<reference key="18">
    <citation type="journal article" date="2005" name="Mol. Cell. Proteomics">
        <title>Quantitative phosphoproteomics applied to the yeast pheromone signaling pathway.</title>
        <authorList>
            <person name="Gruhler A."/>
            <person name="Olsen J.V."/>
            <person name="Mohammed S."/>
            <person name="Mortensen P."/>
            <person name="Faergeman N.J."/>
            <person name="Mann M."/>
            <person name="Jensen O.N."/>
        </authorList>
    </citation>
    <scope>IDENTIFICATION BY MASS SPECTROMETRY [LARGE SCALE ANALYSIS]</scope>
    <source>
        <strain>YAL6B</strain>
    </source>
</reference>
<reference key="19">
    <citation type="journal article" date="2006" name="Biochim. Biophys. Acta">
        <title>Enolase takes part in a macromolecular complex associated to mitochondria in yeast.</title>
        <authorList>
            <person name="Brandina I."/>
            <person name="Graham J."/>
            <person name="Lemaitre-Guillier C."/>
            <person name="Entelis N."/>
            <person name="Krasheninnikov I."/>
            <person name="Sweetlove L."/>
            <person name="Tarassov I."/>
            <person name="Martin R.P."/>
        </authorList>
    </citation>
    <scope>SUBCELLULAR LOCATION</scope>
</reference>
<reference key="20">
    <citation type="journal article" date="2007" name="J. Proteome Res.">
        <title>Large-scale phosphorylation analysis of alpha-factor-arrested Saccharomyces cerevisiae.</title>
        <authorList>
            <person name="Li X."/>
            <person name="Gerber S.A."/>
            <person name="Rudner A.D."/>
            <person name="Beausoleil S.A."/>
            <person name="Haas W."/>
            <person name="Villen J."/>
            <person name="Elias J.E."/>
            <person name="Gygi S.P."/>
        </authorList>
    </citation>
    <scope>PHOSPHORYLATION [LARGE SCALE ANALYSIS] AT SER-163 AND SER-171</scope>
    <scope>IDENTIFICATION BY MASS SPECTROMETRY [LARGE SCALE ANALYSIS]</scope>
    <source>
        <strain>ADR376</strain>
    </source>
</reference>
<reference key="21">
    <citation type="journal article" date="2007" name="Proc. Natl. Acad. Sci. U.S.A.">
        <title>Analysis of phosphorylation sites on proteins from Saccharomyces cerevisiae by electron transfer dissociation (ETD) mass spectrometry.</title>
        <authorList>
            <person name="Chi A."/>
            <person name="Huttenhower C."/>
            <person name="Geer L.Y."/>
            <person name="Coon J.J."/>
            <person name="Syka J.E.P."/>
            <person name="Bai D.L."/>
            <person name="Shabanowitz J."/>
            <person name="Burke D.J."/>
            <person name="Troyanskaya O.G."/>
            <person name="Hunt D.F."/>
        </authorList>
    </citation>
    <scope>IDENTIFICATION BY MASS SPECTROMETRY [LARGE SCALE ANALYSIS]</scope>
</reference>
<reference key="22">
    <citation type="journal article" date="2008" name="Fungal Genet. Biol.">
        <title>Detection and localisation of protein-protein interactions in Saccharomyces cerevisiae using a split-GFP method.</title>
        <authorList>
            <person name="Barnard E."/>
            <person name="McFerran N.V."/>
            <person name="Trudgett A."/>
            <person name="Nelson J."/>
            <person name="Timson D.J."/>
        </authorList>
    </citation>
    <scope>SUBCELLULAR LOCATION</scope>
</reference>
<reference key="23">
    <citation type="journal article" date="2008" name="Mol. Cell. Proteomics">
        <title>A multidimensional chromatography technology for in-depth phosphoproteome analysis.</title>
        <authorList>
            <person name="Albuquerque C.P."/>
            <person name="Smolka M.B."/>
            <person name="Payne S.H."/>
            <person name="Bafna V."/>
            <person name="Eng J."/>
            <person name="Zhou H."/>
        </authorList>
    </citation>
    <scope>PHOSPHORYLATION [LARGE SCALE ANALYSIS] AT SER-803</scope>
    <scope>IDENTIFICATION BY MASS SPECTROMETRY [LARGE SCALE ANALYSIS]</scope>
</reference>
<reference key="24">
    <citation type="journal article" date="2009" name="Science">
        <title>Global analysis of Cdk1 substrate phosphorylation sites provides insights into evolution.</title>
        <authorList>
            <person name="Holt L.J."/>
            <person name="Tuch B.B."/>
            <person name="Villen J."/>
            <person name="Johnson A.D."/>
            <person name="Gygi S.P."/>
            <person name="Morgan D.O."/>
        </authorList>
    </citation>
    <scope>PHOSPHORYLATION [LARGE SCALE ANALYSIS] AT THR-152; SER-163 AND SER-171</scope>
    <scope>IDENTIFICATION BY MASS SPECTROMETRY [LARGE SCALE ANALYSIS]</scope>
</reference>
<reference key="25">
    <citation type="journal article" date="2011" name="J. Mol. Biol.">
        <title>The crystal structures of eukaryotic phosphofructokinases from baker's yeast and rabbit skeletal muscle.</title>
        <authorList>
            <person name="Banaszak K."/>
            <person name="Mechin I."/>
            <person name="Obmolova G."/>
            <person name="Oldham M."/>
            <person name="Chang S.H."/>
            <person name="Ruiz T."/>
            <person name="Radermacher M."/>
            <person name="Kopperschlager G."/>
            <person name="Rypniewski W."/>
        </authorList>
    </citation>
    <scope>X-RAY CRYSTALLOGRAPHY (2.9 ANGSTROMS) OF 194-959 IN COMPLEX WITH SUBSTRATE FRUCTOSE 6-PHOSPHATE AND FRUCTOSE 2,6-BISPHOSPHATE; ALLOSTERIC ACTIVATOR</scope>
</reference>
<organism>
    <name type="scientific">Saccharomyces cerevisiae (strain ATCC 204508 / S288c)</name>
    <name type="common">Baker's yeast</name>
    <dbReference type="NCBI Taxonomy" id="559292"/>
    <lineage>
        <taxon>Eukaryota</taxon>
        <taxon>Fungi</taxon>
        <taxon>Dikarya</taxon>
        <taxon>Ascomycota</taxon>
        <taxon>Saccharomycotina</taxon>
        <taxon>Saccharomycetes</taxon>
        <taxon>Saccharomycetales</taxon>
        <taxon>Saccharomycetaceae</taxon>
        <taxon>Saccharomyces</taxon>
    </lineage>
</organism>
<comment type="function">
    <text evidence="1 3 11 12 13 14 15 17 19">Catalyzes the phosphorylation of D-fructose 6-phosphate to fructose 1,6-bisphosphate by ATP, the first committing step of glycolysis.</text>
</comment>
<comment type="catalytic activity">
    <reaction evidence="1 15">
        <text>beta-D-fructose 6-phosphate + ATP = beta-D-fructose 1,6-bisphosphate + ADP + H(+)</text>
        <dbReference type="Rhea" id="RHEA:16109"/>
        <dbReference type="ChEBI" id="CHEBI:15378"/>
        <dbReference type="ChEBI" id="CHEBI:30616"/>
        <dbReference type="ChEBI" id="CHEBI:32966"/>
        <dbReference type="ChEBI" id="CHEBI:57634"/>
        <dbReference type="ChEBI" id="CHEBI:456216"/>
        <dbReference type="EC" id="2.7.1.11"/>
    </reaction>
</comment>
<comment type="cofactor">
    <cofactor evidence="1">
        <name>Mg(2+)</name>
        <dbReference type="ChEBI" id="CHEBI:18420"/>
    </cofactor>
</comment>
<comment type="activity regulation">
    <text evidence="1 8 15 16">Allosterically activated by ADP, AMP, or fructose 2,6-bisphosphate, and allosterically inhibited by ATP or citrate.</text>
</comment>
<comment type="biophysicochemical properties">
    <kinetics>
        <KM evidence="15">0.24 mM for ATP (without effector)</KM>
        <KM evidence="15">0.3 mM for ATP (with 1 mM AMP)</KM>
        <KM evidence="15">0.31 mM for ATP (with 20 uM fructose 2,6-bisphosphate)</KM>
        <KM evidence="15">1.65 mM for fructose 6-phosphate (without effector)</KM>
        <KM evidence="15">0.51 mM for fructose 6-phosphate (with 1 mM AMP)</KM>
        <KM evidence="15">0.11 mM for fructose 6-phosphate (with 20 uM fructose 2,6-bisphosphate)</KM>
    </kinetics>
</comment>
<comment type="pathway">
    <text evidence="1">Carbohydrate degradation; glycolysis; D-glyceraldehyde 3-phosphate and glycerone phosphate from D-glucose: step 3/4.</text>
</comment>
<comment type="subunit">
    <text evidence="1 5 9 10">Heterooctamer of 4 alpha and 4 beta chains.</text>
</comment>
<comment type="interaction">
    <interactant intactId="EBI-9435">
        <id>P16862</id>
    </interactant>
    <interactant intactId="EBI-9428">
        <id>P16861</id>
        <label>PFK1</label>
    </interactant>
    <organismsDiffer>false</organismsDiffer>
    <experiments>8</experiments>
</comment>
<comment type="interaction">
    <interactant intactId="EBI-9435">
        <id>P16862</id>
    </interactant>
    <interactant intactId="EBI-16219">
        <id>P39940</id>
        <label>RSP5</label>
    </interactant>
    <organismsDiffer>false</organismsDiffer>
    <experiments>3</experiments>
</comment>
<comment type="subcellular location">
    <subcellularLocation>
        <location evidence="1 7">Cytoplasm</location>
    </subcellularLocation>
    <subcellularLocation>
        <location>Mitochondrion outer membrane</location>
        <topology>Peripheral membrane protein</topology>
        <orientation evidence="6">Cytoplasmic side</orientation>
    </subcellularLocation>
</comment>
<comment type="miscellaneous">
    <text evidence="4">Present with 90200 molecules/cell in log phase SD medium.</text>
</comment>
<comment type="similarity">
    <text evidence="1">Belongs to the phosphofructokinase type A (PFKA) family. ATP-dependent PFK group I subfamily. Eukaryotic two domain clade 'E' sub-subfamily.</text>
</comment>
<feature type="initiator methionine" description="Removed" evidence="18">
    <location>
        <position position="1"/>
    </location>
</feature>
<feature type="chain" id="PRO_0000112046" description="ATP-dependent 6-phosphofructokinase subunit beta">
    <location>
        <begin position="2"/>
        <end position="959"/>
    </location>
</feature>
<feature type="region of interest" description="N-terminal catalytic PFK domain 1" evidence="1 21">
    <location>
        <begin position="2"/>
        <end position="573"/>
    </location>
</feature>
<feature type="region of interest" description="Disordered" evidence="2">
    <location>
        <begin position="144"/>
        <end position="167"/>
    </location>
</feature>
<feature type="region of interest" description="Interdomain linker" evidence="1 21">
    <location>
        <begin position="574"/>
        <end position="587"/>
    </location>
</feature>
<feature type="region of interest" description="C-terminal regulatory PFK domain 2" evidence="1 21">
    <location>
        <begin position="588"/>
        <end position="959"/>
    </location>
</feature>
<feature type="compositionally biased region" description="Low complexity" evidence="2">
    <location>
        <begin position="158"/>
        <end position="167"/>
    </location>
</feature>
<feature type="active site" description="Proton acceptor" evidence="1">
    <location>
        <position position="348"/>
    </location>
</feature>
<feature type="binding site" evidence="1">
    <location>
        <position position="206"/>
    </location>
    <ligand>
        <name>ATP</name>
        <dbReference type="ChEBI" id="CHEBI:30616"/>
    </ligand>
</feature>
<feature type="binding site" evidence="1">
    <location>
        <begin position="270"/>
        <end position="271"/>
    </location>
    <ligand>
        <name>ATP</name>
        <dbReference type="ChEBI" id="CHEBI:30616"/>
    </ligand>
</feature>
<feature type="binding site" evidence="1">
    <location>
        <begin position="300"/>
        <end position="303"/>
    </location>
    <ligand>
        <name>ATP</name>
        <dbReference type="ChEBI" id="CHEBI:30616"/>
    </ligand>
</feature>
<feature type="binding site" evidence="1">
    <location>
        <position position="301"/>
    </location>
    <ligand>
        <name>Mg(2+)</name>
        <dbReference type="ChEBI" id="CHEBI:18420"/>
        <note>catalytic</note>
    </ligand>
</feature>
<feature type="binding site" evidence="1 9">
    <location>
        <begin position="346"/>
        <end position="348"/>
    </location>
    <ligand>
        <name>beta-D-fructose 6-phosphate</name>
        <dbReference type="ChEBI" id="CHEBI:57634"/>
        <label>2</label>
        <note>ligand shared with subunit alpha</note>
    </ligand>
</feature>
<feature type="binding site" evidence="1 9">
    <location>
        <position position="383"/>
    </location>
    <ligand>
        <name>beta-D-fructose 6-phosphate</name>
        <dbReference type="ChEBI" id="CHEBI:57634"/>
        <label>1</label>
        <note>ligand shared with subunit alpha</note>
    </ligand>
</feature>
<feature type="binding site" evidence="1 9">
    <location>
        <begin position="390"/>
        <end position="392"/>
    </location>
    <ligand>
        <name>beta-D-fructose 6-phosphate</name>
        <dbReference type="ChEBI" id="CHEBI:57634"/>
        <label>2</label>
        <note>ligand shared with subunit alpha</note>
    </ligand>
</feature>
<feature type="binding site" evidence="1 9">
    <location>
        <position position="447"/>
    </location>
    <ligand>
        <name>beta-D-fructose 6-phosphate</name>
        <dbReference type="ChEBI" id="CHEBI:57634"/>
        <label>2</label>
        <note>ligand shared with subunit alpha</note>
    </ligand>
</feature>
<feature type="binding site" evidence="1 9">
    <location>
        <position position="475"/>
    </location>
    <ligand>
        <name>beta-D-fructose 6-phosphate</name>
        <dbReference type="ChEBI" id="CHEBI:57634"/>
        <label>1</label>
        <note>ligand shared with subunit alpha</note>
    </ligand>
</feature>
<feature type="binding site" evidence="1 9">
    <location>
        <begin position="481"/>
        <end position="484"/>
    </location>
    <ligand>
        <name>beta-D-fructose 6-phosphate</name>
        <dbReference type="ChEBI" id="CHEBI:57634"/>
        <label>2</label>
        <note>ligand shared with subunit alpha</note>
    </ligand>
</feature>
<feature type="binding site" evidence="1 9">
    <location>
        <position position="658"/>
    </location>
    <ligand>
        <name>beta-D-fructose 2,6-bisphosphate</name>
        <dbReference type="ChEBI" id="CHEBI:58579"/>
        <label>2</label>
        <note>allosteric activator; ligand shared with subunit alpha</note>
    </ligand>
</feature>
<feature type="binding site" evidence="1 9">
    <location>
        <begin position="716"/>
        <end position="720"/>
    </location>
    <ligand>
        <name>beta-D-fructose 2,6-bisphosphate</name>
        <dbReference type="ChEBI" id="CHEBI:58579"/>
        <label>2</label>
        <note>allosteric activator; ligand shared with subunit alpha</note>
    </ligand>
</feature>
<feature type="binding site" evidence="1">
    <location>
        <position position="754"/>
    </location>
    <ligand>
        <name>beta-D-fructose 2,6-bisphosphate</name>
        <dbReference type="ChEBI" id="CHEBI:58579"/>
        <label>1</label>
        <note>allosteric activator; ligand shared with subunit alpha</note>
    </ligand>
</feature>
<feature type="binding site" evidence="1 9">
    <location>
        <begin position="761"/>
        <end position="763"/>
    </location>
    <ligand>
        <name>beta-D-fructose 2,6-bisphosphate</name>
        <dbReference type="ChEBI" id="CHEBI:58579"/>
        <label>2</label>
        <note>allosteric activator; ligand shared with subunit alpha</note>
    </ligand>
</feature>
<feature type="binding site" evidence="1">
    <location>
        <position position="847"/>
    </location>
    <ligand>
        <name>beta-D-fructose 2,6-bisphosphate</name>
        <dbReference type="ChEBI" id="CHEBI:58579"/>
        <label>1</label>
        <note>allosteric activator; ligand shared with subunit alpha</note>
    </ligand>
</feature>
<feature type="binding site" evidence="1 9">
    <location>
        <begin position="853"/>
        <end position="856"/>
    </location>
    <ligand>
        <name>beta-D-fructose 2,6-bisphosphate</name>
        <dbReference type="ChEBI" id="CHEBI:58579"/>
        <label>2</label>
        <note>allosteric activator; ligand shared with subunit alpha</note>
    </ligand>
</feature>
<feature type="binding site" evidence="1 9">
    <location>
        <position position="935"/>
    </location>
    <ligand>
        <name>beta-D-fructose 2,6-bisphosphate</name>
        <dbReference type="ChEBI" id="CHEBI:58579"/>
        <label>2</label>
        <note>allosteric activator; ligand shared with subunit alpha</note>
    </ligand>
</feature>
<feature type="modified residue" description="Phosphothreonine" evidence="24">
    <location>
        <position position="152"/>
    </location>
</feature>
<feature type="modified residue" description="Phosphoserine" evidence="22 24">
    <location>
        <position position="163"/>
    </location>
</feature>
<feature type="modified residue" description="Phosphoserine" evidence="22 24">
    <location>
        <position position="171"/>
    </location>
</feature>
<feature type="modified residue" description="Phosphoserine" evidence="23">
    <location>
        <position position="803"/>
    </location>
</feature>
<feature type="mutagenesis site" description="Reduces maximal activity of the holoenzyme by 30%." evidence="17">
    <original>D</original>
    <variation>T</variation>
    <location>
        <position position="301"/>
    </location>
</feature>
<feature type="mutagenesis site" description="Reduces maximal activity of the holoenzyme by 50%. Completely abolishes catalytic activity; when associated with 'T-309' or 'S-356' in subunit alpha." evidence="17">
    <original>D</original>
    <variation>S</variation>
    <location>
        <position position="348"/>
    </location>
</feature>
<feature type="mutagenesis site" description="Reduces maximal activity of the holoenzyme by less than 25%." evidence="17">
    <original>R</original>
    <variation>V</variation>
    <location>
        <position position="439"/>
    </location>
</feature>
<feature type="mutagenesis site" description="Increases the KM for fructose 6-phosphate 50 fold." evidence="17">
    <original>H</original>
    <variation>S</variation>
    <location>
        <position position="481"/>
    </location>
</feature>
<feature type="mutagenesis site" description="Abolishes sensitivity of the holoenzyme to fructose 2,6-bisphosphate activation; when associated with 'D-724' in subunit alpha." evidence="19">
    <original>S</original>
    <variation>D</variation>
    <location>
        <position position="718"/>
    </location>
</feature>
<feature type="mutagenesis site" description="Drastically reduces sensitivity of the holoenzyme to ATP inhibition." evidence="3">
    <original>P</original>
    <variation>L</variation>
    <location>
        <position position="722"/>
    </location>
</feature>
<feature type="mutagenesis site" description="Reduces sensitivity of the holoenzyme to fructose 2,6-bisphosphate activation; when associated with 'S-859' in subunit alpha." evidence="19">
    <original>H</original>
    <variation>S</variation>
    <location>
        <position position="853"/>
    </location>
</feature>
<feature type="sequence conflict" description="In Ref. 1; AAA34860." evidence="20" ref="1">
    <original>V</original>
    <variation>G</variation>
    <location>
        <position position="137"/>
    </location>
</feature>
<feature type="sequence conflict" description="In Ref. 1; AAA34860." evidence="20" ref="1">
    <original>K</original>
    <variation>E</variation>
    <location>
        <position position="880"/>
    </location>
</feature>
<feature type="strand" evidence="25">
    <location>
        <begin position="198"/>
        <end position="206"/>
    </location>
</feature>
<feature type="helix" evidence="25">
    <location>
        <begin position="211"/>
        <end position="225"/>
    </location>
</feature>
<feature type="strand" evidence="25">
    <location>
        <begin position="228"/>
        <end position="232"/>
    </location>
</feature>
<feature type="helix" evidence="25">
    <location>
        <begin position="235"/>
        <end position="240"/>
    </location>
</feature>
<feature type="turn" evidence="25">
    <location>
        <begin position="244"/>
        <end position="246"/>
    </location>
</feature>
<feature type="strand" evidence="25">
    <location>
        <begin position="247"/>
        <end position="250"/>
    </location>
</feature>
<feature type="helix" evidence="25">
    <location>
        <begin position="252"/>
        <end position="255"/>
    </location>
</feature>
<feature type="helix" evidence="25">
    <location>
        <begin position="258"/>
        <end position="260"/>
    </location>
</feature>
<feature type="helix" evidence="25">
    <location>
        <begin position="273"/>
        <end position="275"/>
    </location>
</feature>
<feature type="helix" evidence="25">
    <location>
        <begin position="277"/>
        <end position="289"/>
    </location>
</feature>
<feature type="strand" evidence="25">
    <location>
        <begin position="294"/>
        <end position="299"/>
    </location>
</feature>
<feature type="helix" evidence="25">
    <location>
        <begin position="301"/>
        <end position="322"/>
    </location>
</feature>
<feature type="strand" evidence="25">
    <location>
        <begin position="325"/>
        <end position="327"/>
    </location>
</feature>
<feature type="helix" evidence="25">
    <location>
        <begin position="329"/>
        <end position="334"/>
    </location>
</feature>
<feature type="strand" evidence="25">
    <location>
        <begin position="339"/>
        <end position="345"/>
    </location>
</feature>
<feature type="helix" evidence="25">
    <location>
        <begin position="360"/>
        <end position="380"/>
    </location>
</feature>
<feature type="strand" evidence="25">
    <location>
        <begin position="384"/>
        <end position="389"/>
    </location>
</feature>
<feature type="helix" evidence="25">
    <location>
        <begin position="396"/>
        <end position="405"/>
    </location>
</feature>
<feature type="strand" evidence="25">
    <location>
        <begin position="408"/>
        <end position="411"/>
    </location>
</feature>
<feature type="helix" evidence="25">
    <location>
        <begin position="421"/>
        <end position="435"/>
    </location>
</feature>
<feature type="strand" evidence="25">
    <location>
        <begin position="441"/>
        <end position="446"/>
    </location>
</feature>
<feature type="helix" evidence="25">
    <location>
        <begin position="459"/>
        <end position="468"/>
    </location>
</feature>
<feature type="strand" evidence="25">
    <location>
        <begin position="474"/>
        <end position="478"/>
    </location>
</feature>
<feature type="helix" evidence="25">
    <location>
        <begin position="480"/>
        <end position="483"/>
    </location>
</feature>
<feature type="helix" evidence="25">
    <location>
        <begin position="490"/>
        <end position="509"/>
    </location>
</feature>
<feature type="strand" evidence="25">
    <location>
        <begin position="517"/>
        <end position="524"/>
    </location>
</feature>
<feature type="strand" evidence="25">
    <location>
        <begin position="526"/>
        <end position="530"/>
    </location>
</feature>
<feature type="helix" evidence="25">
    <location>
        <begin position="531"/>
        <end position="546"/>
    </location>
</feature>
<feature type="helix" evidence="25">
    <location>
        <begin position="550"/>
        <end position="556"/>
    </location>
</feature>
<feature type="helix" evidence="25">
    <location>
        <begin position="561"/>
        <end position="573"/>
    </location>
</feature>
<feature type="strand" evidence="25">
    <location>
        <begin position="581"/>
        <end position="584"/>
    </location>
</feature>
<feature type="strand" evidence="25">
    <location>
        <begin position="588"/>
        <end position="596"/>
    </location>
</feature>
<feature type="helix" evidence="25">
    <location>
        <begin position="601"/>
        <end position="615"/>
    </location>
</feature>
<feature type="strand" evidence="25">
    <location>
        <begin position="618"/>
        <end position="622"/>
    </location>
</feature>
<feature type="helix" evidence="25">
    <location>
        <begin position="625"/>
        <end position="632"/>
    </location>
</feature>
<feature type="strand" evidence="25">
    <location>
        <begin position="635"/>
        <end position="637"/>
    </location>
</feature>
<feature type="helix" evidence="25">
    <location>
        <begin position="640"/>
        <end position="643"/>
    </location>
</feature>
<feature type="helix" evidence="25">
    <location>
        <begin position="646"/>
        <end position="648"/>
    </location>
</feature>
<feature type="helix" evidence="25">
    <location>
        <begin position="661"/>
        <end position="664"/>
    </location>
</feature>
<feature type="helix" evidence="25">
    <location>
        <begin position="666"/>
        <end position="676"/>
    </location>
</feature>
<feature type="strand" evidence="25">
    <location>
        <begin position="679"/>
        <end position="686"/>
    </location>
</feature>
<feature type="helix" evidence="25">
    <location>
        <begin position="687"/>
        <end position="697"/>
    </location>
</feature>
<feature type="turn" evidence="25">
    <location>
        <begin position="698"/>
        <end position="702"/>
    </location>
</feature>
<feature type="helix" evidence="25">
    <location>
        <begin position="704"/>
        <end position="706"/>
    </location>
</feature>
<feature type="strand" evidence="25">
    <location>
        <begin position="712"/>
        <end position="715"/>
    </location>
</feature>
<feature type="helix" evidence="25">
    <location>
        <begin position="730"/>
        <end position="751"/>
    </location>
</feature>
<feature type="strand" evidence="25">
    <location>
        <begin position="752"/>
        <end position="760"/>
    </location>
</feature>
<feature type="helix" evidence="25">
    <location>
        <begin position="767"/>
        <end position="776"/>
    </location>
</feature>
<feature type="strand" evidence="25">
    <location>
        <begin position="779"/>
        <end position="782"/>
    </location>
</feature>
<feature type="turn" evidence="25">
    <location>
        <begin position="784"/>
        <end position="786"/>
    </location>
</feature>
<feature type="helix" evidence="25">
    <location>
        <begin position="790"/>
        <end position="807"/>
    </location>
</feature>
<feature type="strand" evidence="25">
    <location>
        <begin position="815"/>
        <end position="820"/>
    </location>
</feature>
<feature type="helix" evidence="25">
    <location>
        <begin position="821"/>
        <end position="823"/>
    </location>
</feature>
<feature type="helix" evidence="25">
    <location>
        <begin position="829"/>
        <end position="840"/>
    </location>
</feature>
<feature type="strand" evidence="25">
    <location>
        <begin position="845"/>
        <end position="850"/>
    </location>
</feature>
<feature type="helix" evidence="25">
    <location>
        <begin position="852"/>
        <end position="856"/>
    </location>
</feature>
<feature type="helix" evidence="25">
    <location>
        <begin position="862"/>
        <end position="881"/>
    </location>
</feature>
<feature type="helix" evidence="25">
    <location>
        <begin position="884"/>
        <end position="889"/>
    </location>
</feature>
<feature type="strand" evidence="25">
    <location>
        <begin position="890"/>
        <end position="894"/>
    </location>
</feature>
<feature type="helix" evidence="25">
    <location>
        <begin position="901"/>
        <end position="904"/>
    </location>
</feature>
<feature type="strand" evidence="25">
    <location>
        <begin position="907"/>
        <end position="911"/>
    </location>
</feature>
<feature type="strand" evidence="25">
    <location>
        <begin position="913"/>
        <end position="915"/>
    </location>
</feature>
<feature type="strand" evidence="25">
    <location>
        <begin position="918"/>
        <end position="921"/>
    </location>
</feature>
<feature type="helix" evidence="25">
    <location>
        <begin position="922"/>
        <end position="928"/>
    </location>
</feature>
<feature type="helix" evidence="25">
    <location>
        <begin position="932"/>
        <end position="934"/>
    </location>
</feature>
<feature type="strand" evidence="25">
    <location>
        <begin position="935"/>
        <end position="939"/>
    </location>
</feature>
<feature type="helix" evidence="25">
    <location>
        <begin position="943"/>
        <end position="952"/>
    </location>
</feature>
<evidence type="ECO:0000255" key="1">
    <source>
        <dbReference type="HAMAP-Rule" id="MF_03184"/>
    </source>
</evidence>
<evidence type="ECO:0000256" key="2">
    <source>
        <dbReference type="SAM" id="MobiDB-lite"/>
    </source>
</evidence>
<evidence type="ECO:0000269" key="3">
    <source>
    </source>
</evidence>
<evidence type="ECO:0000269" key="4">
    <source>
    </source>
</evidence>
<evidence type="ECO:0000269" key="5">
    <source>
    </source>
</evidence>
<evidence type="ECO:0000269" key="6">
    <source>
    </source>
</evidence>
<evidence type="ECO:0000269" key="7">
    <source>
    </source>
</evidence>
<evidence type="ECO:0000269" key="8">
    <source>
    </source>
</evidence>
<evidence type="ECO:0000269" key="9">
    <source>
    </source>
</evidence>
<evidence type="ECO:0000269" key="10">
    <source>
    </source>
</evidence>
<evidence type="ECO:0000269" key="11">
    <source>
    </source>
</evidence>
<evidence type="ECO:0000269" key="12">
    <source>
    </source>
</evidence>
<evidence type="ECO:0000269" key="13">
    <source>
    </source>
</evidence>
<evidence type="ECO:0000269" key="14">
    <source>
    </source>
</evidence>
<evidence type="ECO:0000269" key="15">
    <source>
    </source>
</evidence>
<evidence type="ECO:0000269" key="16">
    <source>
    </source>
</evidence>
<evidence type="ECO:0000269" key="17">
    <source>
    </source>
</evidence>
<evidence type="ECO:0000269" key="18">
    <source>
    </source>
</evidence>
<evidence type="ECO:0000269" key="19">
    <source>
    </source>
</evidence>
<evidence type="ECO:0000305" key="20"/>
<evidence type="ECO:0000305" key="21">
    <source>
    </source>
</evidence>
<evidence type="ECO:0007744" key="22">
    <source>
    </source>
</evidence>
<evidence type="ECO:0007744" key="23">
    <source>
    </source>
</evidence>
<evidence type="ECO:0007744" key="24">
    <source>
    </source>
</evidence>
<evidence type="ECO:0007829" key="25">
    <source>
        <dbReference type="PDB" id="3O8O"/>
    </source>
</evidence>
<dbReference type="EC" id="2.7.1.11" evidence="1"/>
<dbReference type="EMBL" id="M26944">
    <property type="protein sequence ID" value="AAA34860.1"/>
    <property type="molecule type" value="Genomic_DNA"/>
</dbReference>
<dbReference type="EMBL" id="Z48755">
    <property type="protein sequence ID" value="CAA88646.1"/>
    <property type="molecule type" value="Genomic_DNA"/>
</dbReference>
<dbReference type="EMBL" id="BK006946">
    <property type="protein sequence ID" value="DAA10104.1"/>
    <property type="molecule type" value="Genomic_DNA"/>
</dbReference>
<dbReference type="PIR" id="S59446">
    <property type="entry name" value="JQ0017"/>
</dbReference>
<dbReference type="RefSeq" id="NP_013932.1">
    <property type="nucleotide sequence ID" value="NM_001182712.1"/>
</dbReference>
<dbReference type="PDB" id="3O8O">
    <property type="method" value="X-ray"/>
    <property type="resolution" value="2.90 A"/>
    <property type="chains" value="B/D/F/H=194-959"/>
</dbReference>
<dbReference type="PDBsum" id="3O8O"/>
<dbReference type="SMR" id="P16862"/>
<dbReference type="BioGRID" id="35383">
    <property type="interactions" value="443"/>
</dbReference>
<dbReference type="ComplexPortal" id="CPX-554">
    <property type="entry name" value="6-phosphofructokinase complex"/>
</dbReference>
<dbReference type="DIP" id="DIP-2619N"/>
<dbReference type="FunCoup" id="P16862">
    <property type="interactions" value="1289"/>
</dbReference>
<dbReference type="IntAct" id="P16862">
    <property type="interactions" value="113"/>
</dbReference>
<dbReference type="MINT" id="P16862"/>
<dbReference type="STRING" id="4932.YMR205C"/>
<dbReference type="CarbonylDB" id="P16862"/>
<dbReference type="GlyGen" id="P16862">
    <property type="glycosylation" value="1 site"/>
</dbReference>
<dbReference type="iPTMnet" id="P16862"/>
<dbReference type="PaxDb" id="4932-YMR205C"/>
<dbReference type="PeptideAtlas" id="P16862"/>
<dbReference type="EnsemblFungi" id="YMR205C_mRNA">
    <property type="protein sequence ID" value="YMR205C"/>
    <property type="gene ID" value="YMR205C"/>
</dbReference>
<dbReference type="GeneID" id="855245"/>
<dbReference type="KEGG" id="sce:YMR205C"/>
<dbReference type="AGR" id="SGD:S000004818"/>
<dbReference type="SGD" id="S000004818">
    <property type="gene designation" value="PFK2"/>
</dbReference>
<dbReference type="VEuPathDB" id="FungiDB:YMR205C"/>
<dbReference type="eggNOG" id="KOG2440">
    <property type="taxonomic scope" value="Eukaryota"/>
</dbReference>
<dbReference type="GeneTree" id="ENSGT00940000171778"/>
<dbReference type="HOGENOM" id="CLU_011053_0_0_1"/>
<dbReference type="InParanoid" id="P16862"/>
<dbReference type="OMA" id="EWQDQMC"/>
<dbReference type="OrthoDB" id="537915at2759"/>
<dbReference type="BioCyc" id="MetaCyc:YMR205C-MONOMER"/>
<dbReference type="BioCyc" id="YEAST:YMR205C-MONOMER"/>
<dbReference type="BRENDA" id="2.7.1.11">
    <property type="organism ID" value="984"/>
</dbReference>
<dbReference type="Reactome" id="R-SCE-6798695">
    <property type="pathway name" value="Neutrophil degranulation"/>
</dbReference>
<dbReference type="Reactome" id="R-SCE-70171">
    <property type="pathway name" value="Glycolysis"/>
</dbReference>
<dbReference type="SABIO-RK" id="P16862"/>
<dbReference type="UniPathway" id="UPA00109">
    <property type="reaction ID" value="UER00182"/>
</dbReference>
<dbReference type="BioGRID-ORCS" id="855245">
    <property type="hits" value="1 hit in 10 CRISPR screens"/>
</dbReference>
<dbReference type="CD-CODE" id="0F56F502">
    <property type="entry name" value="G-body"/>
</dbReference>
<dbReference type="CD-CODE" id="A777E0F8">
    <property type="entry name" value="P-body"/>
</dbReference>
<dbReference type="CD-CODE" id="E03F929F">
    <property type="entry name" value="Stress granule"/>
</dbReference>
<dbReference type="EvolutionaryTrace" id="P16862"/>
<dbReference type="PRO" id="PR:P16862"/>
<dbReference type="Proteomes" id="UP000002311">
    <property type="component" value="Chromosome XIII"/>
</dbReference>
<dbReference type="RNAct" id="P16862">
    <property type="molecule type" value="protein"/>
</dbReference>
<dbReference type="GO" id="GO:0005945">
    <property type="term" value="C:6-phosphofructokinase complex"/>
    <property type="evidence" value="ECO:0000314"/>
    <property type="project" value="SGD"/>
</dbReference>
<dbReference type="GO" id="GO:0005737">
    <property type="term" value="C:cytoplasm"/>
    <property type="evidence" value="ECO:0007005"/>
    <property type="project" value="SGD"/>
</dbReference>
<dbReference type="GO" id="GO:0005741">
    <property type="term" value="C:mitochondrial outer membrane"/>
    <property type="evidence" value="ECO:0007669"/>
    <property type="project" value="UniProtKB-SubCell"/>
</dbReference>
<dbReference type="GO" id="GO:0005739">
    <property type="term" value="C:mitochondrion"/>
    <property type="evidence" value="ECO:0000314"/>
    <property type="project" value="SGD"/>
</dbReference>
<dbReference type="GO" id="GO:0003872">
    <property type="term" value="F:6-phosphofructokinase activity"/>
    <property type="evidence" value="ECO:0007669"/>
    <property type="project" value="UniProtKB-UniRule"/>
</dbReference>
<dbReference type="GO" id="GO:0005524">
    <property type="term" value="F:ATP binding"/>
    <property type="evidence" value="ECO:0007669"/>
    <property type="project" value="UniProtKB-KW"/>
</dbReference>
<dbReference type="GO" id="GO:0070095">
    <property type="term" value="F:fructose-6-phosphate binding"/>
    <property type="evidence" value="ECO:0000318"/>
    <property type="project" value="GO_Central"/>
</dbReference>
<dbReference type="GO" id="GO:0046872">
    <property type="term" value="F:metal ion binding"/>
    <property type="evidence" value="ECO:0007669"/>
    <property type="project" value="UniProtKB-KW"/>
</dbReference>
<dbReference type="GO" id="GO:0003729">
    <property type="term" value="F:mRNA binding"/>
    <property type="evidence" value="ECO:0000314"/>
    <property type="project" value="SGD"/>
</dbReference>
<dbReference type="GO" id="GO:0061621">
    <property type="term" value="P:canonical glycolysis"/>
    <property type="evidence" value="ECO:0000318"/>
    <property type="project" value="GO_Central"/>
</dbReference>
<dbReference type="GO" id="GO:0030388">
    <property type="term" value="P:fructose 1,6-bisphosphate metabolic process"/>
    <property type="evidence" value="ECO:0000318"/>
    <property type="project" value="GO_Central"/>
</dbReference>
<dbReference type="GO" id="GO:0006002">
    <property type="term" value="P:fructose 6-phosphate metabolic process"/>
    <property type="evidence" value="ECO:0000314"/>
    <property type="project" value="ComplexPortal"/>
</dbReference>
<dbReference type="GO" id="GO:0006096">
    <property type="term" value="P:glycolytic process"/>
    <property type="evidence" value="ECO:0000314"/>
    <property type="project" value="SGD"/>
</dbReference>
<dbReference type="GO" id="GO:1902600">
    <property type="term" value="P:proton transmembrane transport"/>
    <property type="evidence" value="ECO:0000316"/>
    <property type="project" value="UniProtKB"/>
</dbReference>
<dbReference type="GO" id="GO:0051453">
    <property type="term" value="P:regulation of intracellular pH"/>
    <property type="evidence" value="ECO:0000315"/>
    <property type="project" value="SGD"/>
</dbReference>
<dbReference type="GO" id="GO:0007035">
    <property type="term" value="P:vacuolar acidification"/>
    <property type="evidence" value="ECO:0000315"/>
    <property type="project" value="SGD"/>
</dbReference>
<dbReference type="GO" id="GO:0070072">
    <property type="term" value="P:vacuolar proton-transporting V-type ATPase complex assembly"/>
    <property type="evidence" value="ECO:0000315"/>
    <property type="project" value="SGD"/>
</dbReference>
<dbReference type="FunFam" id="3.10.180.10:FF:000045">
    <property type="entry name" value="ATP-dependent 6-phosphofructokinase"/>
    <property type="match status" value="1"/>
</dbReference>
<dbReference type="FunFam" id="3.40.50.450:FF:000010">
    <property type="entry name" value="ATP-dependent 6-phosphofructokinase"/>
    <property type="match status" value="1"/>
</dbReference>
<dbReference type="FunFam" id="3.40.50.460:FF:000007">
    <property type="entry name" value="ATP-dependent 6-phosphofructokinase"/>
    <property type="match status" value="1"/>
</dbReference>
<dbReference type="FunFam" id="3.40.50.460:FF:000008">
    <property type="entry name" value="ATP-dependent 6-phosphofructokinase"/>
    <property type="match status" value="1"/>
</dbReference>
<dbReference type="Gene3D" id="3.40.50.450">
    <property type="match status" value="2"/>
</dbReference>
<dbReference type="Gene3D" id="3.10.180.10">
    <property type="entry name" value="2,3-Dihydroxybiphenyl 1,2-Dioxygenase, domain 1"/>
    <property type="match status" value="1"/>
</dbReference>
<dbReference type="Gene3D" id="3.40.50.460">
    <property type="entry name" value="Phosphofructokinase domain"/>
    <property type="match status" value="2"/>
</dbReference>
<dbReference type="HAMAP" id="MF_03184">
    <property type="entry name" value="Phosphofructokinase_I_E"/>
    <property type="match status" value="1"/>
</dbReference>
<dbReference type="InterPro" id="IPR009161">
    <property type="entry name" value="6-Pfructokinase_euk"/>
</dbReference>
<dbReference type="InterPro" id="IPR022953">
    <property type="entry name" value="ATP_PFK"/>
</dbReference>
<dbReference type="InterPro" id="IPR029068">
    <property type="entry name" value="Glyas_Bleomycin-R_OHBP_Dase"/>
</dbReference>
<dbReference type="InterPro" id="IPR015912">
    <property type="entry name" value="Phosphofructokinase_CS"/>
</dbReference>
<dbReference type="InterPro" id="IPR000023">
    <property type="entry name" value="Phosphofructokinase_dom"/>
</dbReference>
<dbReference type="InterPro" id="IPR035966">
    <property type="entry name" value="PKF_sf"/>
</dbReference>
<dbReference type="NCBIfam" id="TIGR02478">
    <property type="entry name" value="6PF1K_euk"/>
    <property type="match status" value="1"/>
</dbReference>
<dbReference type="PANTHER" id="PTHR13697:SF4">
    <property type="entry name" value="ATP-DEPENDENT 6-PHOSPHOFRUCTOKINASE"/>
    <property type="match status" value="1"/>
</dbReference>
<dbReference type="PANTHER" id="PTHR13697">
    <property type="entry name" value="PHOSPHOFRUCTOKINASE"/>
    <property type="match status" value="1"/>
</dbReference>
<dbReference type="Pfam" id="PF00365">
    <property type="entry name" value="PFK"/>
    <property type="match status" value="2"/>
</dbReference>
<dbReference type="PIRSF" id="PIRSF000533">
    <property type="entry name" value="ATP_PFK_euk"/>
    <property type="match status" value="1"/>
</dbReference>
<dbReference type="PRINTS" id="PR00476">
    <property type="entry name" value="PHFRCTKINASE"/>
</dbReference>
<dbReference type="SUPFAM" id="SSF54593">
    <property type="entry name" value="Glyoxalase/Bleomycin resistance protein/Dihydroxybiphenyl dioxygenase"/>
    <property type="match status" value="1"/>
</dbReference>
<dbReference type="SUPFAM" id="SSF53784">
    <property type="entry name" value="Phosphofructokinase"/>
    <property type="match status" value="2"/>
</dbReference>
<dbReference type="PROSITE" id="PS00433">
    <property type="entry name" value="PHOSPHOFRUCTOKINASE"/>
    <property type="match status" value="2"/>
</dbReference>
<protein>
    <recommendedName>
        <fullName evidence="1">ATP-dependent 6-phosphofructokinase subunit beta</fullName>
        <ecNumber evidence="1">2.7.1.11</ecNumber>
    </recommendedName>
    <alternativeName>
        <fullName evidence="1">ATP-dependent 6-phosphofructokinase</fullName>
        <shortName evidence="1">ATP-PFK</shortName>
        <shortName evidence="1">Phosphofructokinase 2</shortName>
    </alternativeName>
    <alternativeName>
        <fullName evidence="1">Phosphohexokinase</fullName>
    </alternativeName>
</protein>